<feature type="peptide" id="PRO_0000430775" description="Potassium channel toxin alpha-KTx 6 hetlaxin" evidence="4">
    <location>
        <begin position="1"/>
        <end position="34"/>
    </location>
</feature>
<feature type="modified residue" description="Cysteine amide" evidence="4">
    <location>
        <position position="34"/>
    </location>
</feature>
<feature type="disulfide bond" evidence="1">
    <location>
        <begin position="3"/>
        <end position="24"/>
    </location>
</feature>
<feature type="disulfide bond" evidence="1">
    <location>
        <begin position="9"/>
        <end position="29"/>
    </location>
</feature>
<feature type="disulfide bond" evidence="1">
    <location>
        <begin position="13"/>
        <end position="31"/>
    </location>
</feature>
<feature type="disulfide bond" evidence="1">
    <location>
        <begin position="19"/>
        <end position="34"/>
    </location>
</feature>
<feature type="unsure residue" description="Assigned by comparison with orthologs" evidence="6">
    <location>
        <position position="29"/>
    </location>
</feature>
<comment type="function">
    <text evidence="3 4">Binds to voltage-gated potassium channels Kv1.3/KCNA3 (IC(50)=0.48 uM) and Kv1.1/KCNA1 (IC(50)=6.7 uM) and inhibits channel activity.</text>
</comment>
<comment type="subcellular location">
    <subcellularLocation>
        <location evidence="3 4">Secreted</location>
    </subcellularLocation>
</comment>
<comment type="tissue specificity">
    <text evidence="7 8">Expressed by the venom gland.</text>
</comment>
<comment type="domain">
    <text evidence="6">Has the structural arrangement of an alpha-helix connected to antiparallel beta-sheets by disulfide bonds (CS-alpha/beta).</text>
</comment>
<comment type="PTM">
    <text evidence="3 4">Contains 4 disulfide bonds.</text>
</comment>
<comment type="mass spectrometry"/>
<comment type="mass spectrometry"/>
<comment type="similarity">
    <text evidence="2">Belongs to the short scorpion toxin superfamily. Potassium channel inhibitor family. Alpha-KTx 06 subfamily.</text>
</comment>
<evidence type="ECO:0000250" key="1">
    <source>
        <dbReference type="UniProtKB" id="Q10726"/>
    </source>
</evidence>
<evidence type="ECO:0000255" key="2"/>
<evidence type="ECO:0000269" key="3">
    <source>
    </source>
</evidence>
<evidence type="ECO:0000269" key="4">
    <source>
    </source>
</evidence>
<evidence type="ECO:0000303" key="5">
    <source>
    </source>
</evidence>
<evidence type="ECO:0000305" key="6"/>
<evidence type="ECO:0000305" key="7">
    <source>
    </source>
</evidence>
<evidence type="ECO:0000305" key="8">
    <source>
    </source>
</evidence>
<dbReference type="GO" id="GO:0005576">
    <property type="term" value="C:extracellular region"/>
    <property type="evidence" value="ECO:0007669"/>
    <property type="project" value="UniProtKB-SubCell"/>
</dbReference>
<dbReference type="GO" id="GO:0008200">
    <property type="term" value="F:ion channel inhibitor activity"/>
    <property type="evidence" value="ECO:0007669"/>
    <property type="project" value="InterPro"/>
</dbReference>
<dbReference type="GO" id="GO:0015459">
    <property type="term" value="F:potassium channel regulator activity"/>
    <property type="evidence" value="ECO:0007669"/>
    <property type="project" value="UniProtKB-KW"/>
</dbReference>
<dbReference type="GO" id="GO:0090729">
    <property type="term" value="F:toxin activity"/>
    <property type="evidence" value="ECO:0007669"/>
    <property type="project" value="UniProtKB-KW"/>
</dbReference>
<dbReference type="Gene3D" id="3.30.30.10">
    <property type="entry name" value="Knottin, scorpion toxin-like"/>
    <property type="match status" value="1"/>
</dbReference>
<dbReference type="InterPro" id="IPR036574">
    <property type="entry name" value="Scorpion_toxin-like_sf"/>
</dbReference>
<dbReference type="InterPro" id="IPR001947">
    <property type="entry name" value="Scorpion_toxinS_K_inh"/>
</dbReference>
<dbReference type="Pfam" id="PF00451">
    <property type="entry name" value="Toxin_2"/>
    <property type="match status" value="1"/>
</dbReference>
<dbReference type="PRINTS" id="PR00286">
    <property type="entry name" value="CHARYBDTOXIN"/>
</dbReference>
<dbReference type="SUPFAM" id="SSF57095">
    <property type="entry name" value="Scorpion toxin-like"/>
    <property type="match status" value="1"/>
</dbReference>
<dbReference type="PROSITE" id="PS01138">
    <property type="entry name" value="SCORP_SHORT_TOXIN"/>
    <property type="match status" value="1"/>
</dbReference>
<protein>
    <recommendedName>
        <fullName evidence="5">Potassium channel toxin alpha-KTx 6 hetlaxin</fullName>
    </recommendedName>
</protein>
<name>KAX6V_HETLA</name>
<accession>C0HJN0</accession>
<organism>
    <name type="scientific">Heterometrus laoticus</name>
    <name type="common">Thai giant scorpion</name>
    <dbReference type="NCBI Taxonomy" id="217256"/>
    <lineage>
        <taxon>Eukaryota</taxon>
        <taxon>Metazoa</taxon>
        <taxon>Ecdysozoa</taxon>
        <taxon>Arthropoda</taxon>
        <taxon>Chelicerata</taxon>
        <taxon>Arachnida</taxon>
        <taxon>Scorpiones</taxon>
        <taxon>Iurida</taxon>
        <taxon>Scorpionoidea</taxon>
        <taxon>Scorpionidae</taxon>
        <taxon>Heterometrinae</taxon>
        <taxon>Heterometrus</taxon>
    </lineage>
</organism>
<sequence>ISCTGSKQCYDPCKKKTGCPNAKCMNKSCXCYGC</sequence>
<proteinExistence type="evidence at protein level"/>
<reference key="1">
    <citation type="journal article" date="2014" name="Toxicon">
        <title>Vietnamese Heterometrus laoticus scorpion venom: evidence for analgesic and anti-inflammatory activity and isolation of new polypeptide toxin acting on Kv1.3 potassium channel.</title>
        <authorList>
            <person name="Hoang A.N."/>
            <person name="Vo H.D."/>
            <person name="Vo N.P."/>
            <person name="Kudryashova K.S."/>
            <person name="Nekrasova O.V."/>
            <person name="Feofanov A.V."/>
            <person name="Kirpichnikov M.P."/>
            <person name="Andreeva T.V."/>
            <person name="Serebryakova M.V."/>
            <person name="Tsetlin V.I."/>
            <person name="Utkin Y.N."/>
        </authorList>
    </citation>
    <scope>PROTEIN SEQUENCE</scope>
    <scope>FUNCTION</scope>
    <scope>SUBCELLULAR LOCATION</scope>
    <scope>DISULFIDE BONDS</scope>
    <scope>MASS SPECTROMETRY</scope>
    <scope>IDENTIFICATION BY MASS SPECTROMETRY</scope>
    <scope>AMIDATION AT CYS-34</scope>
    <source>
        <tissue>Venom</tissue>
    </source>
</reference>
<reference key="2">
    <citation type="journal article" date="2013" name="Dokl. Biochem. Biophys.">
        <title>Hetlaxin, a new toxin from the Heterometrus laoticus scorpion venom, interacts with voltage-gated potassium channel Kv1.3.</title>
        <authorList>
            <person name="Anh H.N."/>
            <person name="Hoang V.D.M."/>
            <person name="Kudryashova K.S."/>
            <person name="Nekrasova O.V."/>
            <person name="Feofanov A.V."/>
            <person name="Andreeva T.V."/>
            <person name="Tsetlin V.I."/>
            <person name="Utkin Y.N."/>
        </authorList>
    </citation>
    <scope>FUNCTION</scope>
    <scope>SUBCELLULAR LOCATION</scope>
    <scope>DISULFIDE BONDS</scope>
    <scope>MASS SPECTROMETRY</scope>
    <source>
        <tissue>Venom</tissue>
    </source>
</reference>
<keyword id="KW-0027">Amidation</keyword>
<keyword id="KW-0903">Direct protein sequencing</keyword>
<keyword id="KW-1015">Disulfide bond</keyword>
<keyword id="KW-0872">Ion channel impairing toxin</keyword>
<keyword id="KW-0632">Potassium channel impairing toxin</keyword>
<keyword id="KW-0964">Secreted</keyword>
<keyword id="KW-0800">Toxin</keyword>
<keyword id="KW-1220">Voltage-gated potassium channel impairing toxin</keyword>